<reference key="1">
    <citation type="journal article" date="2011" name="J. Bacteriol.">
        <title>Comparative genomics of 28 Salmonella enterica isolates: evidence for CRISPR-mediated adaptive sublineage evolution.</title>
        <authorList>
            <person name="Fricke W.F."/>
            <person name="Mammel M.K."/>
            <person name="McDermott P.F."/>
            <person name="Tartera C."/>
            <person name="White D.G."/>
            <person name="Leclerc J.E."/>
            <person name="Ravel J."/>
            <person name="Cebula T.A."/>
        </authorList>
    </citation>
    <scope>NUCLEOTIDE SEQUENCE [LARGE SCALE GENOMIC DNA]</scope>
    <source>
        <strain>SL254</strain>
    </source>
</reference>
<proteinExistence type="inferred from homology"/>
<feature type="signal peptide" evidence="1">
    <location>
        <begin position="1"/>
        <end position="28"/>
    </location>
</feature>
<feature type="chain" id="PRO_1000201008" description="UPF0482 protein YnfB">
    <location>
        <begin position="29"/>
        <end position="113"/>
    </location>
</feature>
<comment type="similarity">
    <text evidence="1">Belongs to the UPF0482 family.</text>
</comment>
<dbReference type="EMBL" id="CP001113">
    <property type="protein sequence ID" value="ACF61598.1"/>
    <property type="molecule type" value="Genomic_DNA"/>
</dbReference>
<dbReference type="RefSeq" id="WP_001066440.1">
    <property type="nucleotide sequence ID" value="NZ_CCMR01000003.1"/>
</dbReference>
<dbReference type="KEGG" id="see:SNSL254_A1614"/>
<dbReference type="HOGENOM" id="CLU_167574_0_0_6"/>
<dbReference type="Proteomes" id="UP000008824">
    <property type="component" value="Chromosome"/>
</dbReference>
<dbReference type="HAMAP" id="MF_01581">
    <property type="entry name" value="UPF0482"/>
    <property type="match status" value="1"/>
</dbReference>
<dbReference type="InterPro" id="IPR009700">
    <property type="entry name" value="DUF1283"/>
</dbReference>
<dbReference type="NCBIfam" id="NF010180">
    <property type="entry name" value="PRK13659.1"/>
    <property type="match status" value="1"/>
</dbReference>
<dbReference type="Pfam" id="PF06932">
    <property type="entry name" value="DUF1283"/>
    <property type="match status" value="1"/>
</dbReference>
<evidence type="ECO:0000255" key="1">
    <source>
        <dbReference type="HAMAP-Rule" id="MF_01581"/>
    </source>
</evidence>
<organism>
    <name type="scientific">Salmonella newport (strain SL254)</name>
    <dbReference type="NCBI Taxonomy" id="423368"/>
    <lineage>
        <taxon>Bacteria</taxon>
        <taxon>Pseudomonadati</taxon>
        <taxon>Pseudomonadota</taxon>
        <taxon>Gammaproteobacteria</taxon>
        <taxon>Enterobacterales</taxon>
        <taxon>Enterobacteriaceae</taxon>
        <taxon>Salmonella</taxon>
    </lineage>
</organism>
<sequence length="113" mass="12846">MNNTLSKRLCLTAMLTLAAVVYTTSAFAETSKLVIESGDSAQSRQEAAMEKEQWNDTRSLRQKVNTRAEKEWDKADAAFDNRDKCEQSANINAYWEPNTLRCLDRRTGRVITP</sequence>
<keyword id="KW-0732">Signal</keyword>
<name>YNFB_SALNS</name>
<accession>B4T5E0</accession>
<gene>
    <name evidence="1" type="primary">ynfB</name>
    <name type="ordered locus">SNSL254_A1614</name>
</gene>
<protein>
    <recommendedName>
        <fullName evidence="1">UPF0482 protein YnfB</fullName>
    </recommendedName>
</protein>